<accession>A5TYL2</accession>
<proteinExistence type="inferred from homology"/>
<name>MSRA_MYCTA</name>
<dbReference type="EC" id="1.8.4.11" evidence="1"/>
<dbReference type="EMBL" id="CP000611">
    <property type="protein sequence ID" value="ABQ71862.1"/>
    <property type="molecule type" value="Genomic_DNA"/>
</dbReference>
<dbReference type="RefSeq" id="WP_003400942.1">
    <property type="nucleotide sequence ID" value="NZ_CP016972.1"/>
</dbReference>
<dbReference type="SMR" id="A5TYL2"/>
<dbReference type="GeneID" id="45424103"/>
<dbReference type="KEGG" id="mra:MRA_0144"/>
<dbReference type="eggNOG" id="COG0225">
    <property type="taxonomic scope" value="Bacteria"/>
</dbReference>
<dbReference type="HOGENOM" id="CLU_031040_10_2_11"/>
<dbReference type="Proteomes" id="UP000001988">
    <property type="component" value="Chromosome"/>
</dbReference>
<dbReference type="GO" id="GO:0033744">
    <property type="term" value="F:L-methionine:thioredoxin-disulfide S-oxidoreductase activity"/>
    <property type="evidence" value="ECO:0007669"/>
    <property type="project" value="RHEA"/>
</dbReference>
<dbReference type="GO" id="GO:0008113">
    <property type="term" value="F:peptide-methionine (S)-S-oxide reductase activity"/>
    <property type="evidence" value="ECO:0007669"/>
    <property type="project" value="UniProtKB-UniRule"/>
</dbReference>
<dbReference type="GO" id="GO:0036211">
    <property type="term" value="P:protein modification process"/>
    <property type="evidence" value="ECO:0007669"/>
    <property type="project" value="UniProtKB-UniRule"/>
</dbReference>
<dbReference type="FunFam" id="3.30.1060.10:FF:000005">
    <property type="entry name" value="Peptide methionine sulfoxide reductase MsrA"/>
    <property type="match status" value="1"/>
</dbReference>
<dbReference type="Gene3D" id="3.30.1060.10">
    <property type="entry name" value="Peptide methionine sulphoxide reductase MsrA"/>
    <property type="match status" value="1"/>
</dbReference>
<dbReference type="HAMAP" id="MF_01401">
    <property type="entry name" value="MsrA"/>
    <property type="match status" value="1"/>
</dbReference>
<dbReference type="InterPro" id="IPR002569">
    <property type="entry name" value="Met_Sox_Rdtase_MsrA_dom"/>
</dbReference>
<dbReference type="InterPro" id="IPR036509">
    <property type="entry name" value="Met_Sox_Rdtase_MsrA_sf"/>
</dbReference>
<dbReference type="NCBIfam" id="TIGR00401">
    <property type="entry name" value="msrA"/>
    <property type="match status" value="1"/>
</dbReference>
<dbReference type="PANTHER" id="PTHR43774">
    <property type="entry name" value="PEPTIDE METHIONINE SULFOXIDE REDUCTASE"/>
    <property type="match status" value="1"/>
</dbReference>
<dbReference type="PANTHER" id="PTHR43774:SF1">
    <property type="entry name" value="PEPTIDE METHIONINE SULFOXIDE REDUCTASE MSRA 2"/>
    <property type="match status" value="1"/>
</dbReference>
<dbReference type="Pfam" id="PF01625">
    <property type="entry name" value="PMSR"/>
    <property type="match status" value="1"/>
</dbReference>
<dbReference type="SUPFAM" id="SSF55068">
    <property type="entry name" value="Peptide methionine sulfoxide reductase"/>
    <property type="match status" value="1"/>
</dbReference>
<reference key="1">
    <citation type="journal article" date="2008" name="PLoS ONE">
        <title>Genetic basis of virulence attenuation revealed by comparative genomic analysis of Mycobacterium tuberculosis strain H37Ra versus H37Rv.</title>
        <authorList>
            <person name="Zheng H."/>
            <person name="Lu L."/>
            <person name="Wang B."/>
            <person name="Pu S."/>
            <person name="Zhang X."/>
            <person name="Zhu G."/>
            <person name="Shi W."/>
            <person name="Zhang L."/>
            <person name="Wang H."/>
            <person name="Wang S."/>
            <person name="Zhao G."/>
            <person name="Zhang Y."/>
        </authorList>
    </citation>
    <scope>NUCLEOTIDE SEQUENCE [LARGE SCALE GENOMIC DNA]</scope>
    <source>
        <strain>ATCC 25177 / H37Ra</strain>
    </source>
</reference>
<keyword id="KW-0560">Oxidoreductase</keyword>
<keyword id="KW-1185">Reference proteome</keyword>
<evidence type="ECO:0000255" key="1">
    <source>
        <dbReference type="HAMAP-Rule" id="MF_01401"/>
    </source>
</evidence>
<gene>
    <name evidence="1" type="primary">msrA</name>
    <name type="ordered locus">MRA_0144</name>
</gene>
<feature type="chain" id="PRO_1000068344" description="Peptide methionine sulfoxide reductase MsrA">
    <location>
        <begin position="1"/>
        <end position="182"/>
    </location>
</feature>
<feature type="active site" evidence="1">
    <location>
        <position position="13"/>
    </location>
</feature>
<protein>
    <recommendedName>
        <fullName evidence="1">Peptide methionine sulfoxide reductase MsrA</fullName>
        <shortName evidence="1">Protein-methionine-S-oxide reductase</shortName>
        <ecNumber evidence="1">1.8.4.11</ecNumber>
    </recommendedName>
    <alternativeName>
        <fullName evidence="1">Peptide-methionine (S)-S-oxide reductase</fullName>
        <shortName evidence="1">Peptide Met(O) reductase</shortName>
    </alternativeName>
</protein>
<sequence length="182" mass="20485">MTSNQKAILAGGCFWGLQDLIRNQPGVVSTRVGYSGGNIPNATYRNHGTHAEAVEIIFDPTVTDYRTLLEFFFQIHDPTTKDRQGNDRGTSYRSAIFYFDEQQKRIALDTIADVEASGLWPGKVVTEVSPAGDFWEAEPEHQDYLQRYPNGYTCHFVRPGWRLPRRTAESALRASLSPELGT</sequence>
<organism>
    <name type="scientific">Mycobacterium tuberculosis (strain ATCC 25177 / H37Ra)</name>
    <dbReference type="NCBI Taxonomy" id="419947"/>
    <lineage>
        <taxon>Bacteria</taxon>
        <taxon>Bacillati</taxon>
        <taxon>Actinomycetota</taxon>
        <taxon>Actinomycetes</taxon>
        <taxon>Mycobacteriales</taxon>
        <taxon>Mycobacteriaceae</taxon>
        <taxon>Mycobacterium</taxon>
        <taxon>Mycobacterium tuberculosis complex</taxon>
    </lineage>
</organism>
<comment type="function">
    <text evidence="1">Has an important function as a repair enzyme for proteins that have been inactivated by oxidation. Catalyzes the reversible oxidation-reduction of methionine sulfoxide in proteins to methionine.</text>
</comment>
<comment type="catalytic activity">
    <reaction evidence="1">
        <text>L-methionyl-[protein] + [thioredoxin]-disulfide + H2O = L-methionyl-(S)-S-oxide-[protein] + [thioredoxin]-dithiol</text>
        <dbReference type="Rhea" id="RHEA:14217"/>
        <dbReference type="Rhea" id="RHEA-COMP:10698"/>
        <dbReference type="Rhea" id="RHEA-COMP:10700"/>
        <dbReference type="Rhea" id="RHEA-COMP:12313"/>
        <dbReference type="Rhea" id="RHEA-COMP:12315"/>
        <dbReference type="ChEBI" id="CHEBI:15377"/>
        <dbReference type="ChEBI" id="CHEBI:16044"/>
        <dbReference type="ChEBI" id="CHEBI:29950"/>
        <dbReference type="ChEBI" id="CHEBI:44120"/>
        <dbReference type="ChEBI" id="CHEBI:50058"/>
        <dbReference type="EC" id="1.8.4.11"/>
    </reaction>
</comment>
<comment type="catalytic activity">
    <reaction evidence="1">
        <text>[thioredoxin]-disulfide + L-methionine + H2O = L-methionine (S)-S-oxide + [thioredoxin]-dithiol</text>
        <dbReference type="Rhea" id="RHEA:19993"/>
        <dbReference type="Rhea" id="RHEA-COMP:10698"/>
        <dbReference type="Rhea" id="RHEA-COMP:10700"/>
        <dbReference type="ChEBI" id="CHEBI:15377"/>
        <dbReference type="ChEBI" id="CHEBI:29950"/>
        <dbReference type="ChEBI" id="CHEBI:50058"/>
        <dbReference type="ChEBI" id="CHEBI:57844"/>
        <dbReference type="ChEBI" id="CHEBI:58772"/>
        <dbReference type="EC" id="1.8.4.11"/>
    </reaction>
</comment>
<comment type="similarity">
    <text evidence="1">Belongs to the MsrA Met sulfoxide reductase family.</text>
</comment>